<protein>
    <recommendedName>
        <fullName>Mesogenin-1</fullName>
    </recommendedName>
    <alternativeName>
        <fullName>MesP-related bHLH factor</fullName>
    </alternativeName>
    <alternativeName>
        <fullName>Paraxial mesoderm-specific expression and regulatory capacities</fullName>
    </alternativeName>
    <alternativeName>
        <fullName>pMesogenin1</fullName>
        <shortName>pMsgn1</shortName>
    </alternativeName>
</protein>
<accession>Q9W690</accession>
<dbReference type="EMBL" id="AF087650">
    <property type="protein sequence ID" value="AAD28545.1"/>
    <property type="molecule type" value="mRNA"/>
</dbReference>
<dbReference type="EMBL" id="AF261106">
    <property type="protein sequence ID" value="AAF70376.1"/>
    <property type="molecule type" value="mRNA"/>
</dbReference>
<dbReference type="RefSeq" id="NP_001083813.1">
    <property type="nucleotide sequence ID" value="NM_001090344.1"/>
</dbReference>
<dbReference type="SMR" id="Q9W690"/>
<dbReference type="GeneID" id="399133"/>
<dbReference type="KEGG" id="xla:399133"/>
<dbReference type="AGR" id="Xenbase:XB-GENE-972091"/>
<dbReference type="CTD" id="399133"/>
<dbReference type="Xenbase" id="XB-GENE-972091">
    <property type="gene designation" value="msgn1.L"/>
</dbReference>
<dbReference type="OMA" id="SSWDWKN"/>
<dbReference type="OrthoDB" id="10063280at2759"/>
<dbReference type="Proteomes" id="UP000186698">
    <property type="component" value="Chromosome 5L"/>
</dbReference>
<dbReference type="Bgee" id="399133">
    <property type="expression patterns" value="Expressed in neurula embryo and 1 other cell type or tissue"/>
</dbReference>
<dbReference type="GO" id="GO:0005634">
    <property type="term" value="C:nucleus"/>
    <property type="evidence" value="ECO:0000318"/>
    <property type="project" value="GO_Central"/>
</dbReference>
<dbReference type="GO" id="GO:0000981">
    <property type="term" value="F:DNA-binding transcription factor activity, RNA polymerase II-specific"/>
    <property type="evidence" value="ECO:0000318"/>
    <property type="project" value="GO_Central"/>
</dbReference>
<dbReference type="GO" id="GO:0046983">
    <property type="term" value="F:protein dimerization activity"/>
    <property type="evidence" value="ECO:0007669"/>
    <property type="project" value="InterPro"/>
</dbReference>
<dbReference type="GO" id="GO:0000978">
    <property type="term" value="F:RNA polymerase II cis-regulatory region sequence-specific DNA binding"/>
    <property type="evidence" value="ECO:0000318"/>
    <property type="project" value="GO_Central"/>
</dbReference>
<dbReference type="GO" id="GO:0030154">
    <property type="term" value="P:cell differentiation"/>
    <property type="evidence" value="ECO:0007669"/>
    <property type="project" value="UniProtKB-KW"/>
</dbReference>
<dbReference type="GO" id="GO:0001707">
    <property type="term" value="P:mesoderm formation"/>
    <property type="evidence" value="ECO:0000318"/>
    <property type="project" value="GO_Central"/>
</dbReference>
<dbReference type="GO" id="GO:0006357">
    <property type="term" value="P:regulation of transcription by RNA polymerase II"/>
    <property type="evidence" value="ECO:0000318"/>
    <property type="project" value="GO_Central"/>
</dbReference>
<dbReference type="Gene3D" id="4.10.280.10">
    <property type="entry name" value="Helix-loop-helix DNA-binding domain"/>
    <property type="match status" value="1"/>
</dbReference>
<dbReference type="InterPro" id="IPR011598">
    <property type="entry name" value="bHLH_dom"/>
</dbReference>
<dbReference type="InterPro" id="IPR036638">
    <property type="entry name" value="HLH_DNA-bd_sf"/>
</dbReference>
<dbReference type="InterPro" id="IPR040259">
    <property type="entry name" value="Mesogenin/MesP"/>
</dbReference>
<dbReference type="PANTHER" id="PTHR20937">
    <property type="entry name" value="IP14615P"/>
    <property type="match status" value="1"/>
</dbReference>
<dbReference type="PANTHER" id="PTHR20937:SF4">
    <property type="entry name" value="MESOGENIN-1"/>
    <property type="match status" value="1"/>
</dbReference>
<dbReference type="Pfam" id="PF00010">
    <property type="entry name" value="HLH"/>
    <property type="match status" value="1"/>
</dbReference>
<dbReference type="SMART" id="SM00353">
    <property type="entry name" value="HLH"/>
    <property type="match status" value="1"/>
</dbReference>
<dbReference type="SUPFAM" id="SSF47459">
    <property type="entry name" value="HLH, helix-loop-helix DNA-binding domain"/>
    <property type="match status" value="1"/>
</dbReference>
<dbReference type="PROSITE" id="PS50888">
    <property type="entry name" value="BHLH"/>
    <property type="match status" value="1"/>
</dbReference>
<comment type="function">
    <text evidence="4">Involved in specifying the paraxial, but not dorsal, mesoderm. May regulate the expression of T-box transcription factors required for mesoderm formation and differentiation, such as brachyury T, wnt8, vegt and eomes.</text>
</comment>
<comment type="subcellular location">
    <subcellularLocation>
        <location evidence="1">Nucleus</location>
    </subcellularLocation>
</comment>
<comment type="developmental stage">
    <text evidence="3 4">Expressed specifically in presomitic paraxial mesoderm and its immediate presumptive progenitor cells and sharply down-regulated in presumptive somites. Expression is first detected at gastrulation. Expressed throughout development until the tadpole stage. Expression is predominantly localized in ventrolateral mesoderm but is absent from dorsal mesoderm in gastrulae. In tailbud stage embryos, expression is still detected and is localized to the most caudal (unsegmented) paraxial mesoderm. At the tadpole stage, expression remains in the tailbud.</text>
</comment>
<sequence length="173" mass="19588">METLHHPLVKMEEDYALSSDSEPNSTCMANTWDWKSHNESYSLSQTPSPQSVSPAASYESTYSSSPHTGQGLEEMPFSYSLLQYPTLCHGDNGALTKKDHGHKTSMTTHRRRKASEREKLRMRAIAEALHTLRNNLPPMYSQGRQPLTKIQTLKCTINYISELTNLLQCSKRA</sequence>
<keyword id="KW-0217">Developmental protein</keyword>
<keyword id="KW-0221">Differentiation</keyword>
<keyword id="KW-0238">DNA-binding</keyword>
<keyword id="KW-0539">Nucleus</keyword>
<keyword id="KW-1185">Reference proteome</keyword>
<keyword id="KW-0804">Transcription</keyword>
<keyword id="KW-0805">Transcription regulation</keyword>
<feature type="chain" id="PRO_0000330032" description="Mesogenin-1">
    <location>
        <begin position="1"/>
        <end position="173"/>
    </location>
</feature>
<feature type="domain" description="bHLH" evidence="1">
    <location>
        <begin position="109"/>
        <end position="163"/>
    </location>
</feature>
<feature type="region of interest" description="Disordered" evidence="2">
    <location>
        <begin position="39"/>
        <end position="69"/>
    </location>
</feature>
<feature type="region of interest" description="Disordered" evidence="2">
    <location>
        <begin position="96"/>
        <end position="117"/>
    </location>
</feature>
<feature type="compositionally biased region" description="Polar residues" evidence="2">
    <location>
        <begin position="39"/>
        <end position="68"/>
    </location>
</feature>
<feature type="compositionally biased region" description="Basic residues" evidence="2">
    <location>
        <begin position="99"/>
        <end position="114"/>
    </location>
</feature>
<proteinExistence type="evidence at transcript level"/>
<reference key="1">
    <citation type="journal article" date="1999" name="Mech. Dev.">
        <title>Mespo: a novel basic helix-loop-helix gene expressed in the presomitic mesoderm and posterior tailbud of Xenopus embryos.</title>
        <authorList>
            <person name="Joseph E.M."/>
            <person name="Cassetta L.A."/>
        </authorList>
    </citation>
    <scope>NUCLEOTIDE SEQUENCE [MRNA]</scope>
    <scope>DEVELOPMENTAL STAGE</scope>
</reference>
<reference key="2">
    <citation type="journal article" date="2000" name="Dev. Biol.">
        <title>The bHLH class protein pMesogenin1 can specify paraxial mesoderm phenotypes.</title>
        <authorList>
            <person name="Yoon J.K."/>
            <person name="Moon R.T."/>
            <person name="Wold B."/>
        </authorList>
    </citation>
    <scope>NUCLEOTIDE SEQUENCE [MRNA]</scope>
    <scope>FUNCTION</scope>
    <scope>DEVELOPMENTAL STAGE</scope>
</reference>
<organism>
    <name type="scientific">Xenopus laevis</name>
    <name type="common">African clawed frog</name>
    <dbReference type="NCBI Taxonomy" id="8355"/>
    <lineage>
        <taxon>Eukaryota</taxon>
        <taxon>Metazoa</taxon>
        <taxon>Chordata</taxon>
        <taxon>Craniata</taxon>
        <taxon>Vertebrata</taxon>
        <taxon>Euteleostomi</taxon>
        <taxon>Amphibia</taxon>
        <taxon>Batrachia</taxon>
        <taxon>Anura</taxon>
        <taxon>Pipoidea</taxon>
        <taxon>Pipidae</taxon>
        <taxon>Xenopodinae</taxon>
        <taxon>Xenopus</taxon>
        <taxon>Xenopus</taxon>
    </lineage>
</organism>
<name>MSGN1_XENLA</name>
<gene>
    <name type="primary">msgn1</name>
    <name type="synonym">mespo</name>
</gene>
<evidence type="ECO:0000255" key="1">
    <source>
        <dbReference type="PROSITE-ProRule" id="PRU00981"/>
    </source>
</evidence>
<evidence type="ECO:0000256" key="2">
    <source>
        <dbReference type="SAM" id="MobiDB-lite"/>
    </source>
</evidence>
<evidence type="ECO:0000269" key="3">
    <source>
    </source>
</evidence>
<evidence type="ECO:0000269" key="4">
    <source>
    </source>
</evidence>